<proteinExistence type="evidence at protein level"/>
<evidence type="ECO:0000255" key="1">
    <source>
        <dbReference type="PROSITE-ProRule" id="PRU00498"/>
    </source>
</evidence>
<evidence type="ECO:0000269" key="2">
    <source>
    </source>
</evidence>
<evidence type="ECO:0000303" key="3">
    <source>
    </source>
</evidence>
<evidence type="ECO:0000305" key="4"/>
<evidence type="ECO:0000305" key="5">
    <source>
    </source>
</evidence>
<protein>
    <recommendedName>
        <fullName evidence="3">Self-incompatibility protein S1</fullName>
    </recommendedName>
</protein>
<accession>Q40975</accession>
<organism>
    <name type="scientific">Papaver rhoeas</name>
    <name type="common">Common poppy</name>
    <dbReference type="NCBI Taxonomy" id="33128"/>
    <lineage>
        <taxon>Eukaryota</taxon>
        <taxon>Viridiplantae</taxon>
        <taxon>Streptophyta</taxon>
        <taxon>Embryophyta</taxon>
        <taxon>Tracheophyta</taxon>
        <taxon>Spermatophyta</taxon>
        <taxon>Magnoliopsida</taxon>
        <taxon>Ranunculales</taxon>
        <taxon>Papaveraceae</taxon>
        <taxon>Papaveroideae</taxon>
        <taxon>Papaver</taxon>
    </lineage>
</organism>
<reference key="1">
    <citation type="journal article" date="1994" name="Proc. Natl. Acad. Sci. U.S.A.">
        <title>Cloning and expression of a distinctive class of self-incompatibility (S) gene from Papaver rhoeas L.</title>
        <authorList>
            <person name="Foote H.C.C."/>
            <person name="Ride J.P."/>
            <person name="Franklin-Tong V.E."/>
            <person name="Walker E.A."/>
            <person name="Lawrence M.J."/>
            <person name="Franklin F.C.H."/>
        </authorList>
    </citation>
    <scope>NUCLEOTIDE SEQUENCE [MRNA]</scope>
    <scope>PROTEIN SEQUENCE OF 20-36</scope>
    <scope>FUNCTION</scope>
    <scope>TISSUE SPECIFICITY</scope>
    <scope>DEVELOPMENTAL STAGE</scope>
    <scope>GLYCOSYLATION</scope>
    <source>
        <strain>cv. Shirley</strain>
    </source>
</reference>
<name>S1_PAPRH</name>
<dbReference type="EMBL" id="X74333">
    <property type="protein sequence ID" value="CAA52380.1"/>
    <property type="molecule type" value="mRNA"/>
</dbReference>
<dbReference type="PIR" id="S41450">
    <property type="entry name" value="S41450"/>
</dbReference>
<dbReference type="SMR" id="Q40975"/>
<dbReference type="GlyCosmos" id="Q40975">
    <property type="glycosylation" value="1 site, No reported glycans"/>
</dbReference>
<dbReference type="GO" id="GO:0005576">
    <property type="term" value="C:extracellular region"/>
    <property type="evidence" value="ECO:0007669"/>
    <property type="project" value="UniProtKB-SubCell"/>
</dbReference>
<dbReference type="GO" id="GO:0060320">
    <property type="term" value="P:rejection of self pollen"/>
    <property type="evidence" value="ECO:0000314"/>
    <property type="project" value="UniProtKB"/>
</dbReference>
<dbReference type="InterPro" id="IPR010264">
    <property type="entry name" value="Self-incomp_S1"/>
</dbReference>
<dbReference type="PANTHER" id="PTHR31232">
    <property type="match status" value="1"/>
</dbReference>
<dbReference type="PANTHER" id="PTHR31232:SF18">
    <property type="entry name" value="S-PROTEIN HOMOLOG"/>
    <property type="match status" value="1"/>
</dbReference>
<dbReference type="Pfam" id="PF05938">
    <property type="entry name" value="Self-incomp_S1"/>
    <property type="match status" value="1"/>
</dbReference>
<gene>
    <name evidence="3" type="primary">S1</name>
</gene>
<keyword id="KW-0903">Direct protein sequencing</keyword>
<keyword id="KW-0325">Glycoprotein</keyword>
<keyword id="KW-0964">Secreted</keyword>
<keyword id="KW-0713">Self-incompatibility</keyword>
<keyword id="KW-0732">Signal</keyword>
<sequence>MNIFYVIVLLSFFLSKSSGFFPVIEVRIMNRRGNGRSIGIHCRSKDNDLQNQTVTSGHDMSFSFREDFFHTTHFYCDLQWDKETKFGFYSYQAKRDDDGRCSSQCLWKIMDDGLYGFDQEHQIWQIYHLIKKERKEGRT</sequence>
<comment type="function">
    <text evidence="2">Exhibits specific pollen self-inhibitory activity thus preventing self-fertilization.</text>
</comment>
<comment type="subcellular location">
    <subcellularLocation>
        <location evidence="5">Secreted</location>
    </subcellularLocation>
</comment>
<comment type="tissue specificity">
    <text evidence="2">Accumulates in the stigma (at protein level).</text>
</comment>
<comment type="developmental stage">
    <text evidence="2">First expressed in stigmas at low levels in flowers two days preanthesis. Accumulates rapidely the day before anthesis and stays at high levels in stigmatic tissues for several days after flower opening.</text>
</comment>
<comment type="PTM">
    <text evidence="2">Glycosylated (S1b) and unglocosylated (S1a) forms coexist.</text>
</comment>
<comment type="similarity">
    <text evidence="4">Belongs to the plant self-incompatibility (S1) protein family.</text>
</comment>
<feature type="signal peptide" evidence="2">
    <location>
        <begin position="1"/>
        <end position="19"/>
    </location>
</feature>
<feature type="chain" id="PRO_5004231503" description="Self-incompatibility protein S1">
    <location>
        <begin position="20"/>
        <end position="139"/>
    </location>
</feature>
<feature type="glycosylation site" description="N-linked (GlcNAc...) asparagine" evidence="1">
    <location>
        <position position="51"/>
    </location>
</feature>